<keyword id="KW-0010">Activator</keyword>
<keyword id="KW-0238">DNA-binding</keyword>
<keyword id="KW-0539">Nucleus</keyword>
<keyword id="KW-0597">Phosphoprotein</keyword>
<keyword id="KW-1185">Reference proteome</keyword>
<keyword id="KW-0804">Transcription</keyword>
<keyword id="KW-0805">Transcription regulation</keyword>
<dbReference type="EMBL" id="AJ003200">
    <property type="protein sequence ID" value="CAA05980.1"/>
    <property type="molecule type" value="mRNA"/>
</dbReference>
<dbReference type="EMBL" id="AF168008">
    <property type="protein sequence ID" value="AAD50434.1"/>
    <property type="molecule type" value="mRNA"/>
</dbReference>
<dbReference type="SMR" id="Q9PUQ1"/>
<dbReference type="FunCoup" id="Q9PUQ1">
    <property type="interactions" value="539"/>
</dbReference>
<dbReference type="STRING" id="7955.ENSDARP00000016969"/>
<dbReference type="PaxDb" id="7955-ENSDARP00000016969"/>
<dbReference type="AGR" id="ZFIN:ZDB-GENE-990415-71"/>
<dbReference type="ZFIN" id="ZDB-GENE-990415-71">
    <property type="gene designation" value="etv4"/>
</dbReference>
<dbReference type="eggNOG" id="KOG3806">
    <property type="taxonomic scope" value="Eukaryota"/>
</dbReference>
<dbReference type="InParanoid" id="Q9PUQ1"/>
<dbReference type="PhylomeDB" id="Q9PUQ1"/>
<dbReference type="PRO" id="PR:Q9PUQ1"/>
<dbReference type="Proteomes" id="UP000000437">
    <property type="component" value="Unplaced"/>
</dbReference>
<dbReference type="GO" id="GO:0005634">
    <property type="term" value="C:nucleus"/>
    <property type="evidence" value="ECO:0000318"/>
    <property type="project" value="GO_Central"/>
</dbReference>
<dbReference type="GO" id="GO:0000981">
    <property type="term" value="F:DNA-binding transcription factor activity, RNA polymerase II-specific"/>
    <property type="evidence" value="ECO:0000318"/>
    <property type="project" value="GO_Central"/>
</dbReference>
<dbReference type="GO" id="GO:0043565">
    <property type="term" value="F:sequence-specific DNA binding"/>
    <property type="evidence" value="ECO:0000314"/>
    <property type="project" value="ZFIN"/>
</dbReference>
<dbReference type="GO" id="GO:0030154">
    <property type="term" value="P:cell differentiation"/>
    <property type="evidence" value="ECO:0000318"/>
    <property type="project" value="GO_Central"/>
</dbReference>
<dbReference type="GO" id="GO:0009792">
    <property type="term" value="P:embryo development ending in birth or egg hatching"/>
    <property type="evidence" value="ECO:0000303"/>
    <property type="project" value="UniProtKB"/>
</dbReference>
<dbReference type="GO" id="GO:0035108">
    <property type="term" value="P:limb morphogenesis"/>
    <property type="evidence" value="ECO:0000316"/>
    <property type="project" value="ZFIN"/>
</dbReference>
<dbReference type="GO" id="GO:0045893">
    <property type="term" value="P:positive regulation of DNA-templated transcription"/>
    <property type="evidence" value="ECO:0000314"/>
    <property type="project" value="UniProtKB"/>
</dbReference>
<dbReference type="GO" id="GO:0035778">
    <property type="term" value="P:pronephric nephron tubule epithelial cell differentiation"/>
    <property type="evidence" value="ECO:0000315"/>
    <property type="project" value="ZFIN"/>
</dbReference>
<dbReference type="GO" id="GO:0048793">
    <property type="term" value="P:pronephros development"/>
    <property type="evidence" value="ECO:0000316"/>
    <property type="project" value="ZFIN"/>
</dbReference>
<dbReference type="GO" id="GO:0006355">
    <property type="term" value="P:regulation of DNA-templated transcription"/>
    <property type="evidence" value="ECO:0000314"/>
    <property type="project" value="UniProtKB"/>
</dbReference>
<dbReference type="GO" id="GO:0006357">
    <property type="term" value="P:regulation of transcription by RNA polymerase II"/>
    <property type="evidence" value="ECO:0000318"/>
    <property type="project" value="GO_Central"/>
</dbReference>
<dbReference type="FunFam" id="1.10.10.10:FF:000121">
    <property type="entry name" value="ETS translocation variant 5"/>
    <property type="match status" value="1"/>
</dbReference>
<dbReference type="Gene3D" id="1.10.10.10">
    <property type="entry name" value="Winged helix-like DNA-binding domain superfamily/Winged helix DNA-binding domain"/>
    <property type="match status" value="1"/>
</dbReference>
<dbReference type="InterPro" id="IPR000418">
    <property type="entry name" value="Ets_dom"/>
</dbReference>
<dbReference type="InterPro" id="IPR046328">
    <property type="entry name" value="ETS_fam"/>
</dbReference>
<dbReference type="InterPro" id="IPR006715">
    <property type="entry name" value="ETS_PEA3_N"/>
</dbReference>
<dbReference type="InterPro" id="IPR036388">
    <property type="entry name" value="WH-like_DNA-bd_sf"/>
</dbReference>
<dbReference type="InterPro" id="IPR036390">
    <property type="entry name" value="WH_DNA-bd_sf"/>
</dbReference>
<dbReference type="PANTHER" id="PTHR11849">
    <property type="entry name" value="ETS"/>
    <property type="match status" value="1"/>
</dbReference>
<dbReference type="PANTHER" id="PTHR11849:SF181">
    <property type="entry name" value="ETS TRANSLOCATION VARIANT 4"/>
    <property type="match status" value="1"/>
</dbReference>
<dbReference type="Pfam" id="PF00178">
    <property type="entry name" value="Ets"/>
    <property type="match status" value="1"/>
</dbReference>
<dbReference type="Pfam" id="PF04621">
    <property type="entry name" value="ETS_PEA3_N"/>
    <property type="match status" value="1"/>
</dbReference>
<dbReference type="PRINTS" id="PR00454">
    <property type="entry name" value="ETSDOMAIN"/>
</dbReference>
<dbReference type="SMART" id="SM00413">
    <property type="entry name" value="ETS"/>
    <property type="match status" value="1"/>
</dbReference>
<dbReference type="SUPFAM" id="SSF46785">
    <property type="entry name" value="Winged helix' DNA-binding domain"/>
    <property type="match status" value="1"/>
</dbReference>
<dbReference type="PROSITE" id="PS00345">
    <property type="entry name" value="ETS_DOMAIN_1"/>
    <property type="match status" value="1"/>
</dbReference>
<dbReference type="PROSITE" id="PS00346">
    <property type="entry name" value="ETS_DOMAIN_2"/>
    <property type="match status" value="1"/>
</dbReference>
<dbReference type="PROSITE" id="PS50061">
    <property type="entry name" value="ETS_DOMAIN_3"/>
    <property type="match status" value="1"/>
</dbReference>
<protein>
    <recommendedName>
        <fullName>ETS translocation variant 4</fullName>
    </recommendedName>
    <alternativeName>
        <fullName>Polyomavirus enhancer activator 3 homolog</fullName>
        <shortName>Protein PEA3</shortName>
    </alternativeName>
</protein>
<evidence type="ECO:0000255" key="1">
    <source>
        <dbReference type="PROSITE-ProRule" id="PRU00237"/>
    </source>
</evidence>
<evidence type="ECO:0000256" key="2">
    <source>
        <dbReference type="SAM" id="MobiDB-lite"/>
    </source>
</evidence>
<evidence type="ECO:0000269" key="3">
    <source>
    </source>
</evidence>
<evidence type="ECO:0000269" key="4">
    <source>
    </source>
</evidence>
<evidence type="ECO:0000269" key="5">
    <source>
    </source>
</evidence>
<evidence type="ECO:0000269" key="6">
    <source>
    </source>
</evidence>
<evidence type="ECO:0000305" key="7"/>
<reference key="1">
    <citation type="journal article" date="1998" name="Oncogene">
        <title>Molecular characterization of the zebrafish PEA3 ETS-domain transcription factor.</title>
        <authorList>
            <person name="Brown L.A."/>
            <person name="Amores A."/>
            <person name="Schilling T.F."/>
            <person name="Jowett T."/>
            <person name="Baert J.-L."/>
            <person name="de Launoit Y."/>
            <person name="Sharrocks A.D."/>
        </authorList>
    </citation>
    <scope>NUCLEOTIDE SEQUENCE [MRNA]</scope>
    <scope>TISSUE SPECIFICITY</scope>
    <scope>DNA-BINDING</scope>
    <scope>REGULATION OF ACTIVITY</scope>
    <source>
        <tissue>Embryo</tissue>
    </source>
</reference>
<reference key="2">
    <citation type="journal article" date="1999" name="Mech. Dev.">
        <title>Expression of the Ets transcription factors erm and pea3 in early zebrafish development.</title>
        <authorList>
            <person name="Muenchberg S.R."/>
            <person name="Ober E.A."/>
            <person name="Steinbeisser H."/>
        </authorList>
    </citation>
    <scope>NUCLEOTIDE SEQUENCE [MRNA]</scope>
    <scope>TISSUE SPECIFICITY</scope>
    <source>
        <tissue>Embryo</tissue>
    </source>
</reference>
<reference key="3">
    <citation type="journal article" date="2001" name="Curr. Biol.">
        <title>Zebrafish pea3 and erm are general targets of FGF8 signaling.</title>
        <authorList>
            <person name="Roehl H."/>
            <person name="Nuesslein-Volhard C."/>
        </authorList>
    </citation>
    <scope>TISSUE SPECIFICITY</scope>
    <scope>INDUCTION BY FGF8</scope>
</reference>
<reference key="4">
    <citation type="journal article" date="2001" name="Mech. Dev.">
        <title>Tight transcriptional control of the ETS domain factors Erm and Pea3 by Fgf signaling during early zebrafish development.</title>
        <authorList>
            <person name="Raible F."/>
            <person name="Brand M."/>
        </authorList>
    </citation>
    <scope>TISSUE SPECIFICITY</scope>
    <scope>INDUCTION BY FGF3 AND FGF8</scope>
</reference>
<name>ETV4_DANRE</name>
<proteinExistence type="evidence at protein level"/>
<feature type="chain" id="PRO_0000204120" description="ETS translocation variant 4">
    <location>
        <begin position="1"/>
        <end position="494"/>
    </location>
</feature>
<feature type="DNA-binding region" description="ETS" evidence="1">
    <location>
        <begin position="350"/>
        <end position="430"/>
    </location>
</feature>
<feature type="region of interest" description="Disordered" evidence="2">
    <location>
        <begin position="82"/>
        <end position="113"/>
    </location>
</feature>
<feature type="region of interest" description="Disordered" evidence="2">
    <location>
        <begin position="139"/>
        <end position="201"/>
    </location>
</feature>
<feature type="compositionally biased region" description="Polar residues" evidence="2">
    <location>
        <begin position="100"/>
        <end position="113"/>
    </location>
</feature>
<feature type="compositionally biased region" description="Low complexity" evidence="2">
    <location>
        <begin position="176"/>
        <end position="187"/>
    </location>
</feature>
<feature type="compositionally biased region" description="Polar residues" evidence="2">
    <location>
        <begin position="188"/>
        <end position="197"/>
    </location>
</feature>
<feature type="sequence conflict" description="In Ref. 2; AAD50434." evidence="7" ref="2">
    <original>A</original>
    <variation>G</variation>
    <location>
        <position position="148"/>
    </location>
</feature>
<feature type="sequence conflict" description="In Ref. 2; AAD50434." evidence="7" ref="2">
    <original>S</original>
    <variation>A</variation>
    <location>
        <position position="177"/>
    </location>
</feature>
<feature type="sequence conflict" description="In Ref. 2; AAD50434." evidence="7" ref="2">
    <original>ID</original>
    <variation>MH</variation>
    <location>
        <begin position="217"/>
        <end position="218"/>
    </location>
</feature>
<feature type="sequence conflict" description="In Ref. 2; AAD50434." evidence="7" ref="2">
    <location>
        <begin position="224"/>
        <end position="226"/>
    </location>
</feature>
<feature type="sequence conflict" description="In Ref. 2; AAD50434." evidence="7" ref="2">
    <original>IE</original>
    <variation>MQ</variation>
    <location>
        <begin position="392"/>
        <end position="393"/>
    </location>
</feature>
<accession>Q9PUQ1</accession>
<accession>O57586</accession>
<sequence length="494" mass="55621">MDYKMDGYLDQQVPYTLANRSQGNGPLNRLLMATKRKYMDAELPPQESEDLFQDLSQLQETWLTEAQVPDSDEQFVPDFHSENSVAFHSPPVKIKKEPQSPGSDPSQSCSHKQSFSYPNGEQCLYASAYEQKRAAVAGAGGSKSSCPATPMSPMQHYSPKPTVGTRQESGYMNPPSSSQSHACHSHSYPMNPSSRFPSGSAEMCPPFASQGQALQRIDPAHASGGGGGGYHRQHSDPCLPYPPQQTFKQEYMDPLYDRAAHINGPQPQRFPPAHMMVKQEPTDYTYEPDVPGCPSMYHHNEGYSNPQHNSEGYMFENDSRVVPEKFEGEVKQEGGSVFREGAPYQRRGSLQLWQFLVALLDDPSNAHFIAWTGRGMEFKLIEPEEVARLWGIEKNRPAMNYDKLSRSLRYYYEKGIMQKVAGERYVYKFVCEPEALITLAFPDNQRPSLKAEFERYVNEEDTVPLSHLDEGVSYPPEPAATNMGPQPYSKGYMY</sequence>
<comment type="function">
    <text>Transcriptional activator that binds to the (5'-CCGGA[AT]-3') motif. May control the acquisition of specific cell fates at an early stage during development of the somites and nervous system. May mediate the cellular effects of the fibroblast growth factors on embryogenesis.</text>
</comment>
<comment type="subcellular location">
    <subcellularLocation>
        <location evidence="1">Nucleus</location>
    </subcellularLocation>
</comment>
<comment type="tissue specificity">
    <text evidence="3 4 5 6">In the embryo, expressed ubiquitously until the late blastula stage, in the marginal zone of gastrula stages, in the presumptive forebrain and hindbrain and in the trunk region of early somite stages. In later stages, also expressed in Rohon-Beard neurons, epiphysis, lateral line placodes, pectoral fin buds, developing lens and heart.</text>
</comment>
<comment type="developmental stage">
    <text>First detected in the embryo after 4.3 hours.</text>
</comment>
<comment type="induction">
    <text evidence="4 5">By the fibroblast growth factors FGF3 and FGF8.</text>
</comment>
<comment type="PTM">
    <text evidence="7">Phosphorylated.</text>
</comment>
<comment type="miscellaneous">
    <text>Transcriptional activation activity is enhanced by Raf1, ERK and PKA.</text>
</comment>
<comment type="similarity">
    <text evidence="7">Belongs to the ETS family.</text>
</comment>
<gene>
    <name type="primary">etv4</name>
    <name type="synonym">pea3</name>
</gene>
<organism>
    <name type="scientific">Danio rerio</name>
    <name type="common">Zebrafish</name>
    <name type="synonym">Brachydanio rerio</name>
    <dbReference type="NCBI Taxonomy" id="7955"/>
    <lineage>
        <taxon>Eukaryota</taxon>
        <taxon>Metazoa</taxon>
        <taxon>Chordata</taxon>
        <taxon>Craniata</taxon>
        <taxon>Vertebrata</taxon>
        <taxon>Euteleostomi</taxon>
        <taxon>Actinopterygii</taxon>
        <taxon>Neopterygii</taxon>
        <taxon>Teleostei</taxon>
        <taxon>Ostariophysi</taxon>
        <taxon>Cypriniformes</taxon>
        <taxon>Danionidae</taxon>
        <taxon>Danioninae</taxon>
        <taxon>Danio</taxon>
    </lineage>
</organism>